<protein>
    <recommendedName>
        <fullName evidence="8">Ice-binding protein K1-A</fullName>
    </recommendedName>
    <alternativeName>
        <fullName evidence="6">Antifreeze protein 8</fullName>
        <shortName evidence="6">AFP8</shortName>
    </alternativeName>
    <alternativeName>
        <fullName evidence="7">TAFP-3</fullName>
    </alternativeName>
    <alternativeName>
        <fullName evidence="5 6">TisAFP8</fullName>
    </alternativeName>
</protein>
<organism>
    <name type="scientific">Typhula ishikariensis</name>
    <name type="common">Gray snow mold fungus</name>
    <dbReference type="NCBI Taxonomy" id="69361"/>
    <lineage>
        <taxon>Eukaryota</taxon>
        <taxon>Fungi</taxon>
        <taxon>Dikarya</taxon>
        <taxon>Basidiomycota</taxon>
        <taxon>Agaricomycotina</taxon>
        <taxon>Agaricomycetes</taxon>
        <taxon>Agaricomycetidae</taxon>
        <taxon>Agaricales</taxon>
        <taxon>Pleurotineae</taxon>
        <taxon>Typhulaceae</taxon>
        <taxon>Typhula</taxon>
    </lineage>
</organism>
<dbReference type="EMBL" id="AB109742">
    <property type="protein sequence ID" value="BAD02891.1"/>
    <property type="molecule type" value="mRNA"/>
</dbReference>
<dbReference type="PDB" id="5B5H">
    <property type="method" value="X-ray"/>
    <property type="resolution" value="1.00 A"/>
    <property type="chains" value="A=21-243"/>
</dbReference>
<dbReference type="PDBsum" id="5B5H"/>
<dbReference type="SMR" id="Q76CE8"/>
<dbReference type="GO" id="GO:0005576">
    <property type="term" value="C:extracellular region"/>
    <property type="evidence" value="ECO:0007669"/>
    <property type="project" value="UniProtKB-SubCell"/>
</dbReference>
<dbReference type="InterPro" id="IPR021884">
    <property type="entry name" value="Ice-bd_prot"/>
</dbReference>
<dbReference type="Pfam" id="PF11999">
    <property type="entry name" value="Ice_binding"/>
    <property type="match status" value="1"/>
</dbReference>
<gene>
    <name evidence="10" type="primary">K1-A</name>
</gene>
<sequence length="243" mass="24199">MFSSTYLLAIIALAVSSVFAAGPTAVPLGTAGNYAILASAGVSTVPQSVITGAVGLSPAAATFLTGFSLTMSSTGTFSTSTQVTGQLTAADYGTPTPSILTTAIGDMGTAYVNAATRSGPNFLEIYTGALGGKILPPGLYKWTSPVGASADFTIIGTSTDTWIFQIAGTLGLAAGKKIILAGGAQAKNIVWVVAGAVSIEAGAKFEGVILAKTAVTLKTGSSLNGRILSQTAVALQKATVVQK</sequence>
<reference key="1">
    <citation type="journal article" date="2003" name="Can. J. Bot.">
        <title>Antifreeze proteins from snow mold fungi.</title>
        <authorList>
            <person name="Hoshino T."/>
            <person name="Kiriaki M."/>
            <person name="Ohgiya S."/>
            <person name="Fujiwara M."/>
            <person name="Kondo H."/>
            <person name="Nishimiya Y."/>
            <person name="Yumoto I."/>
            <person name="Tsuda S."/>
        </authorList>
    </citation>
    <scope>NUCLEOTIDE SEQUENCE [MRNA]</scope>
    <scope>PROTEIN SEQUENCE OF 21-39</scope>
    <scope>FUNCTION</scope>
    <scope>SUBCELLULAR LOCATION</scope>
    <scope>INDUCTION</scope>
    <scope>MASS SPECTROMETRY</scope>
    <scope>SIGNAL</scope>
    <source>
        <strain evidence="7">BRB-1</strain>
    </source>
</reference>
<reference key="2">
    <citation type="journal article" date="2010" name="FEBS J.">
        <title>Comparison of functional properties of two fungal antifreeze proteins from Antarctomyces psychrotrophicus and Typhula ishikariensis.</title>
        <authorList>
            <person name="Xiao N."/>
            <person name="Suzuki K."/>
            <person name="Nishimiya Y."/>
            <person name="Kondo H."/>
            <person name="Miura A."/>
            <person name="Tsuda S."/>
            <person name="Hoshino T."/>
        </authorList>
    </citation>
    <scope>FUNCTION</scope>
    <scope>BIOPHYSICOCHEMICAL PROPERTIES</scope>
    <scope>SUBCELLULAR LOCATION</scope>
</reference>
<reference evidence="11" key="3">
    <citation type="journal article" date="2016" name="Biochem. J.">
        <title>Hydrophobic ice-binding sites confer hyperactivity of an antifreeze protein from a snow mold fungus.</title>
        <authorList>
            <person name="Cheng J."/>
            <person name="Hanada Y."/>
            <person name="Miura A."/>
            <person name="Tsuda S."/>
            <person name="Kondo H."/>
        </authorList>
    </citation>
    <scope>X-RAY CRYSTALLOGRAPHY (1.00 ANGSTROMS) OF 21-243</scope>
    <scope>FUNCTION</scope>
    <scope>SITE</scope>
    <scope>MUTAGENESIS OF ALA-40; PRO-145; ALA-167; GLY-171; LEU-172; SER-198 AND ALA-232</scope>
    <scope>CIRCULAR DICHROISM ANALYSIS</scope>
</reference>
<accession>Q76CE8</accession>
<proteinExistence type="evidence at protein level"/>
<name>IBPKA_TYPIS</name>
<feature type="signal peptide" evidence="1 4">
    <location>
        <begin position="1"/>
        <end position="20"/>
    </location>
</feature>
<feature type="chain" id="PRO_5004286028" description="Ice-binding protein K1-A" evidence="1">
    <location>
        <begin position="21"/>
        <end position="243"/>
    </location>
</feature>
<feature type="site" description="Ice-binding" evidence="9">
    <location>
        <position position="40"/>
    </location>
</feature>
<feature type="site" description="Ice-binding" evidence="9">
    <location>
        <position position="232"/>
    </location>
</feature>
<feature type="mutagenesis site" description="Has 46% thermal hysteresis (TH) activity of that of the wild-type. Has 25% thermal hysteresis (TH) activity of that of the wild-type; when associated with S-232." evidence="3">
    <original>A</original>
    <variation>T</variation>
    <location>
        <position position="40"/>
    </location>
</feature>
<feature type="mutagenesis site" description="Has 58% thermal hysteresis (TH) activity of that of the wild-type." evidence="3">
    <original>P</original>
    <variation>S</variation>
    <location>
        <position position="145"/>
    </location>
</feature>
<feature type="mutagenesis site" description="Has 63% thermal hysteresis (TH) activity of that of the wild-type." evidence="3">
    <original>A</original>
    <variation>D</variation>
    <location>
        <position position="167"/>
    </location>
</feature>
<feature type="mutagenesis site" description="Has 81% thermal hysteresis (TH) activity of that of the wild-type." evidence="3">
    <original>G</original>
    <variation>D</variation>
    <location>
        <position position="171"/>
    </location>
</feature>
<feature type="mutagenesis site" description="Has 66% thermal hysteresis (TH) activity of that of the wild-type." evidence="3">
    <original>L</original>
    <variation>V</variation>
    <location>
        <position position="172"/>
    </location>
</feature>
<feature type="mutagenesis site" description="Has 63% thermal hysteresis (TH) activity of that of the wild-type." evidence="3">
    <original>S</original>
    <variation>N</variation>
    <location>
        <position position="198"/>
    </location>
</feature>
<feature type="mutagenesis site" description="Has 32% thermal hysteresis (TH) activity of that of the wild-type. Has 25% thermal hysteresis (TH) activity of that of the wild-type; when associated with T-40." evidence="3">
    <original>A</original>
    <variation>S</variation>
    <location>
        <position position="232"/>
    </location>
</feature>
<feature type="helix" evidence="12">
    <location>
        <begin position="29"/>
        <end position="33"/>
    </location>
</feature>
<feature type="strand" evidence="12">
    <location>
        <begin position="35"/>
        <end position="40"/>
    </location>
</feature>
<feature type="strand" evidence="12">
    <location>
        <begin position="42"/>
        <end position="47"/>
    </location>
</feature>
<feature type="strand" evidence="12">
    <location>
        <begin position="49"/>
        <end position="52"/>
    </location>
</feature>
<feature type="strand" evidence="12">
    <location>
        <begin position="54"/>
        <end position="56"/>
    </location>
</feature>
<feature type="helix" evidence="12">
    <location>
        <begin position="61"/>
        <end position="63"/>
    </location>
</feature>
<feature type="strand" evidence="12">
    <location>
        <begin position="64"/>
        <end position="67"/>
    </location>
</feature>
<feature type="strand" evidence="12">
    <location>
        <begin position="83"/>
        <end position="85"/>
    </location>
</feature>
<feature type="strand" evidence="12">
    <location>
        <begin position="87"/>
        <end position="89"/>
    </location>
</feature>
<feature type="helix" evidence="12">
    <location>
        <begin position="96"/>
        <end position="115"/>
    </location>
</feature>
<feature type="strand" evidence="12">
    <location>
        <begin position="121"/>
        <end position="124"/>
    </location>
</feature>
<feature type="helix" evidence="12">
    <location>
        <begin position="125"/>
        <end position="128"/>
    </location>
</feature>
<feature type="strand" evidence="12">
    <location>
        <begin position="137"/>
        <end position="144"/>
    </location>
</feature>
<feature type="strand" evidence="12">
    <location>
        <begin position="146"/>
        <end position="150"/>
    </location>
</feature>
<feature type="strand" evidence="12">
    <location>
        <begin position="152"/>
        <end position="155"/>
    </location>
</feature>
<feature type="strand" evidence="12">
    <location>
        <begin position="162"/>
        <end position="168"/>
    </location>
</feature>
<feature type="strand" evidence="12">
    <location>
        <begin position="170"/>
        <end position="172"/>
    </location>
</feature>
<feature type="strand" evidence="12">
    <location>
        <begin position="177"/>
        <end position="181"/>
    </location>
</feature>
<feature type="helix" evidence="12">
    <location>
        <begin position="186"/>
        <end position="188"/>
    </location>
</feature>
<feature type="strand" evidence="12">
    <location>
        <begin position="189"/>
        <end position="195"/>
    </location>
</feature>
<feature type="strand" evidence="12">
    <location>
        <begin position="197"/>
        <end position="199"/>
    </location>
</feature>
<feature type="strand" evidence="12">
    <location>
        <begin position="204"/>
        <end position="213"/>
    </location>
</feature>
<feature type="strand" evidence="12">
    <location>
        <begin position="215"/>
        <end position="217"/>
    </location>
</feature>
<feature type="strand" evidence="12">
    <location>
        <begin position="222"/>
        <end position="231"/>
    </location>
</feature>
<feature type="strand" evidence="12">
    <location>
        <begin position="233"/>
        <end position="237"/>
    </location>
</feature>
<feature type="strand" evidence="12">
    <location>
        <begin position="239"/>
        <end position="242"/>
    </location>
</feature>
<comment type="function">
    <text evidence="2 3 4">Binds to the surface of ice crystals (PubMed:20030710, PubMed:27613857, Ref.1). Inhibits growth of the ice crystals (PubMed:20030710). Has antifreeze activity for survival under snow cover. Has high thermal hysteresis (TH) activity, which is the ability to lower the freezing point of an aqueous solution below its melting point, and thus the freezing of the cell fluid can be prevented protecting the organism from ice damage (PubMed:20030710, PubMed:27613857). The TH activity of this protein is 2.0 degrees Celsius at 0.11 mM (PubMed:27613857).</text>
</comment>
<comment type="biophysicochemical properties">
    <phDependence>
        <text evidence="2">Optimum pH is 5.8.</text>
    </phDependence>
</comment>
<comment type="subcellular location">
    <subcellularLocation>
        <location evidence="2 4">Secreted</location>
    </subcellularLocation>
</comment>
<comment type="induction">
    <text evidence="4">By low temperatures, 0 degrees Celsius.</text>
</comment>
<comment type="mass spectrometry" mass="22021.0" method="MALDI" evidence="4">
    <text>The measured mass is that of the mature protein.</text>
</comment>
<comment type="similarity">
    <text evidence="8">Belongs to the ice-binding protein family.</text>
</comment>
<keyword id="KW-0002">3D-structure</keyword>
<keyword id="KW-0047">Antifreeze protein</keyword>
<keyword id="KW-0903">Direct protein sequencing</keyword>
<keyword id="KW-0964">Secreted</keyword>
<keyword id="KW-0732">Signal</keyword>
<keyword id="KW-0346">Stress response</keyword>
<evidence type="ECO:0000255" key="1"/>
<evidence type="ECO:0000269" key="2">
    <source>
    </source>
</evidence>
<evidence type="ECO:0000269" key="3">
    <source>
    </source>
</evidence>
<evidence type="ECO:0000269" key="4">
    <source ref="1"/>
</evidence>
<evidence type="ECO:0000303" key="5">
    <source>
    </source>
</evidence>
<evidence type="ECO:0000303" key="6">
    <source>
    </source>
</evidence>
<evidence type="ECO:0000303" key="7">
    <source ref="1"/>
</evidence>
<evidence type="ECO:0000305" key="8"/>
<evidence type="ECO:0000305" key="9">
    <source>
    </source>
</evidence>
<evidence type="ECO:0000312" key="10">
    <source>
        <dbReference type="EMBL" id="BAD02891.1"/>
    </source>
</evidence>
<evidence type="ECO:0007744" key="11">
    <source>
        <dbReference type="PDB" id="5B5H"/>
    </source>
</evidence>
<evidence type="ECO:0007829" key="12">
    <source>
        <dbReference type="PDB" id="5B5H"/>
    </source>
</evidence>